<feature type="chain" id="PRO_0000370282" description="CASP-like protein 1D1">
    <location>
        <begin position="1"/>
        <end position="191"/>
    </location>
</feature>
<feature type="topological domain" description="Cytoplasmic" evidence="2">
    <location>
        <begin position="1"/>
        <end position="22"/>
    </location>
</feature>
<feature type="transmembrane region" description="Helical" evidence="2">
    <location>
        <begin position="23"/>
        <end position="43"/>
    </location>
</feature>
<feature type="topological domain" description="Extracellular" evidence="2">
    <location>
        <begin position="44"/>
        <end position="73"/>
    </location>
</feature>
<feature type="transmembrane region" description="Helical" evidence="2">
    <location>
        <begin position="74"/>
        <end position="94"/>
    </location>
</feature>
<feature type="topological domain" description="Cytoplasmic" evidence="2">
    <location>
        <begin position="95"/>
        <end position="118"/>
    </location>
</feature>
<feature type="transmembrane region" description="Helical" evidence="2">
    <location>
        <begin position="119"/>
        <end position="139"/>
    </location>
</feature>
<feature type="topological domain" description="Extracellular" evidence="2">
    <location>
        <begin position="140"/>
        <end position="160"/>
    </location>
</feature>
<feature type="transmembrane region" description="Helical" evidence="2">
    <location>
        <begin position="161"/>
        <end position="181"/>
    </location>
</feature>
<feature type="topological domain" description="Cytoplasmic" evidence="2">
    <location>
        <begin position="182"/>
        <end position="191"/>
    </location>
</feature>
<dbReference type="EMBL" id="AC186747">
    <property type="protein sequence ID" value="ABF69991.1"/>
    <property type="status" value="ALT_SEQ"/>
    <property type="molecule type" value="Genomic_DNA"/>
</dbReference>
<dbReference type="SMR" id="Q1EPG6"/>
<dbReference type="GO" id="GO:0005886">
    <property type="term" value="C:plasma membrane"/>
    <property type="evidence" value="ECO:0007669"/>
    <property type="project" value="UniProtKB-SubCell"/>
</dbReference>
<dbReference type="InterPro" id="IPR006459">
    <property type="entry name" value="CASP/CASPL"/>
</dbReference>
<dbReference type="InterPro" id="IPR006702">
    <property type="entry name" value="CASP_dom"/>
</dbReference>
<dbReference type="InterPro" id="IPR044173">
    <property type="entry name" value="CASPL"/>
</dbReference>
<dbReference type="NCBIfam" id="TIGR01569">
    <property type="entry name" value="A_tha_TIGR01569"/>
    <property type="match status" value="1"/>
</dbReference>
<dbReference type="PANTHER" id="PTHR36488">
    <property type="entry name" value="CASP-LIKE PROTEIN 1U1"/>
    <property type="match status" value="1"/>
</dbReference>
<dbReference type="PANTHER" id="PTHR36488:SF8">
    <property type="entry name" value="CASP-LIKE PROTEIN 1U1"/>
    <property type="match status" value="1"/>
</dbReference>
<dbReference type="Pfam" id="PF04535">
    <property type="entry name" value="CASP_dom"/>
    <property type="match status" value="1"/>
</dbReference>
<keyword id="KW-1003">Cell membrane</keyword>
<keyword id="KW-0472">Membrane</keyword>
<keyword id="KW-0812">Transmembrane</keyword>
<keyword id="KW-1133">Transmembrane helix</keyword>
<sequence>MTSTSKDTPESGYAVPPPNLFGVDFGLRLLLLASAVSALVVLVTSKQTESIPTSLPPPFPAFISRDAKFQHSPAFIYLLVALSVTCFYSIITMVASFAAITSPSSSPRMLFHLVLSDAVMAGVMASAAGTAGSVAYLGLKGNSHVNWNKVCNVYDKFCRHVGSSAAVSLVASVLLVSLVVLSSYSLYRRCR</sequence>
<proteinExistence type="inferred from homology"/>
<evidence type="ECO:0000250" key="1"/>
<evidence type="ECO:0000255" key="2"/>
<evidence type="ECO:0000305" key="3"/>
<comment type="subunit">
    <text evidence="1">Homodimer and heterodimers.</text>
</comment>
<comment type="subcellular location">
    <subcellularLocation>
        <location evidence="1">Cell membrane</location>
        <topology evidence="1">Multi-pass membrane protein</topology>
    </subcellularLocation>
</comment>
<comment type="similarity">
    <text evidence="3">Belongs to the Casparian strip membrane proteins (CASP) family.</text>
</comment>
<name>CSPL2_MUSAC</name>
<accession>Q1EPG6</accession>
<gene>
    <name type="ORF">MA4_106O17.52</name>
</gene>
<reference key="1">
    <citation type="submission" date="2006-05" db="EMBL/GenBank/DDBJ databases">
        <authorList>
            <person name="Ciampi A.Y."/>
            <person name="Santos C.M.R."/>
            <person name="da Silva F.R."/>
            <person name="Pappas G.J. Jr."/>
            <person name="Ronning C.M."/>
            <person name="Cheung F."/>
            <person name="Haas B.J."/>
            <person name="Piffanelli P."/>
            <person name="Town C.D."/>
            <person name="Miller R.N.G."/>
            <person name="Souza M.T. Jr."/>
        </authorList>
    </citation>
    <scope>NUCLEOTIDE SEQUENCE [LARGE SCALE GENOMIC DNA]</scope>
</reference>
<reference key="2">
    <citation type="journal article" date="2014" name="Plant Physiol.">
        <title>Functional and evolutionary analysis of the CASPARIAN STRIP MEMBRANE DOMAIN PROTEIN family.</title>
        <authorList>
            <person name="Roppolo D."/>
            <person name="Boeckmann B."/>
            <person name="Pfister A."/>
            <person name="Boutet E."/>
            <person name="Rubio M.C."/>
            <person name="Denervaud-Tendon V."/>
            <person name="Vermeer J.E."/>
            <person name="Gheyselinck J."/>
            <person name="Xenarios I."/>
            <person name="Geldner N."/>
        </authorList>
    </citation>
    <scope>GENE FAMILY</scope>
    <scope>NOMENCLATURE</scope>
</reference>
<protein>
    <recommendedName>
        <fullName>CASP-like protein 1D1</fullName>
        <shortName>MaCASPL1D1</shortName>
    </recommendedName>
</protein>
<organism>
    <name type="scientific">Musa acuminata</name>
    <name type="common">Banana</name>
    <name type="synonym">Musa cavendishii</name>
    <dbReference type="NCBI Taxonomy" id="4641"/>
    <lineage>
        <taxon>Eukaryota</taxon>
        <taxon>Viridiplantae</taxon>
        <taxon>Streptophyta</taxon>
        <taxon>Embryophyta</taxon>
        <taxon>Tracheophyta</taxon>
        <taxon>Spermatophyta</taxon>
        <taxon>Magnoliopsida</taxon>
        <taxon>Liliopsida</taxon>
        <taxon>Zingiberales</taxon>
        <taxon>Musaceae</taxon>
        <taxon>Musa</taxon>
    </lineage>
</organism>